<name>ZFY_PANTR</name>
<sequence length="801" mass="90513">MDEDEFELQPQEPNSFFDGIGADATHMDGDQIVVEIQEAVFVSNIVDSDIAVHNFVPDDPDSVVIQDVIEDVVIEEDVQCSDILEEADVSENVIIPEQVLDSDVTEEVSLPHCTVPDDVLASDITSTSMSMPEHVLTSESMHVCDIEHVEHMVHDSVVEAEIITDPLTSDIVSEEVLVADCAPEAIIDASGISVDQQDNDKASCEDYLMISLDDAGKIEHDGSTGVTIDAESEMDPCKVDSTCPEVIKVYIFKADPGEDDLGGTVDIVESEPENDHGVELLDQNSSIRVPREKMVYMTVNDSQQEDEDLNVAEIADEVYMEVIVGEEDAAVAAAAAAVHEQQIDEDEMKTFVPIAWAAAYGNNSDGIENRNGTASALLHIDESAGLGRLAKQKPKKKRRPDSRQYQTAIIIGPDGHPLTVYPCMICGKKFKSRGFLKRHMKNHPEHLAKKKYHCTDCDYTTNKKISLHNHLESHKLTSKAEKAIECDECGKHFSHAGALFTHKMVHKEKGANKMHKCKFCEYETAEQGLLNRHLLAVHSKNFPHICVECGKGFRHPSELKKHMRIHTGEKPYQCQYCEYRSADSSNLKTHIKTKHSKEMPLKCDICLLTFSDTKEVQQHTLVHQESKTHQCLHCDHKSSNSSDLKRHVISVHTKDYPHKCEMCEKGFHRPSELKKHVAVHKGKKMHQCRHCDFKIADPFVLSRHILSVHTKDLPFRCKRCRKGFRQQNELKKHMKTHSGRKVYQCEYCEYSTTDASGFKRHVISIHTKDYPHRCEYCKKGFRRPSEKNQHIMRHHKEVGLP</sequence>
<comment type="function">
    <text evidence="1">Probable transcriptional activator. Binds to the consensus sequence 5'-AGGCCY-3' (By similarity).</text>
</comment>
<comment type="subcellular location">
    <subcellularLocation>
        <location>Nucleus</location>
    </subcellularLocation>
</comment>
<comment type="domain">
    <text evidence="1">The binding of ZFY to DNA is mediated by the interaction of the GGCC core base pairs with zinc fingers 12 and 13.</text>
</comment>
<comment type="similarity">
    <text evidence="4">Belongs to the krueppel C2H2-type zinc-finger protein family. ZFX/ZFY subfamily.</text>
</comment>
<reference key="1">
    <citation type="journal article" date="2005" name="Mol. Biol. Evol.">
        <title>A genomic region evolving toward different GC contents in humans and chimpanzees indicates a recent and regionally limited shift in the mutation pattern.</title>
        <authorList>
            <person name="Ebersberger I."/>
            <person name="Meyer M."/>
        </authorList>
    </citation>
    <scope>NUCLEOTIDE SEQUENCE [GENOMIC DNA]</scope>
</reference>
<reference key="2">
    <citation type="submission" date="2004-07" db="EMBL/GenBank/DDBJ databases">
        <title>The DNA sequence of the chimpanzee Y chromosome.</title>
        <authorList>
            <person name="Hughes J.F."/>
            <person name="Pyntikova T."/>
            <person name="Skaletsky H."/>
            <person name="Minx P.J."/>
            <person name="Rozen S."/>
            <person name="Wilson R.K."/>
            <person name="Page D.C."/>
        </authorList>
    </citation>
    <scope>NUCLEOTIDE SEQUENCE [MRNA]</scope>
</reference>
<gene>
    <name type="primary">ZFY</name>
</gene>
<dbReference type="EMBL" id="AY913763">
    <property type="protein sequence ID" value="AAX94760.1"/>
    <property type="molecule type" value="Genomic_DNA"/>
</dbReference>
<dbReference type="EMBL" id="AY679779">
    <property type="protein sequence ID" value="AAT84367.1"/>
    <property type="molecule type" value="mRNA"/>
</dbReference>
<dbReference type="RefSeq" id="NP_001009003.1">
    <property type="nucleotide sequence ID" value="NM_001009003.1"/>
</dbReference>
<dbReference type="RefSeq" id="XP_009443987.1">
    <property type="nucleotide sequence ID" value="XM_009445712.5"/>
</dbReference>
<dbReference type="RefSeq" id="XP_009443992.1">
    <property type="nucleotide sequence ID" value="XM_009445717.5"/>
</dbReference>
<dbReference type="SMR" id="Q6B4Z5"/>
<dbReference type="FunCoup" id="Q6B4Z5">
    <property type="interactions" value="1378"/>
</dbReference>
<dbReference type="STRING" id="9598.ENSPTRP00000071475"/>
<dbReference type="PaxDb" id="9598-ENSPTRP00000038749"/>
<dbReference type="Ensembl" id="ENSPTRT00000085840.1">
    <property type="protein sequence ID" value="ENSPTRP00000071475.1"/>
    <property type="gene ID" value="ENSPTRG00000022471.7"/>
</dbReference>
<dbReference type="GeneID" id="449580"/>
<dbReference type="KEGG" id="ptr:449580"/>
<dbReference type="CTD" id="7544"/>
<dbReference type="VGNC" id="VGNC:5894">
    <property type="gene designation" value="ZFY"/>
</dbReference>
<dbReference type="eggNOG" id="KOG1721">
    <property type="taxonomic scope" value="Eukaryota"/>
</dbReference>
<dbReference type="GeneTree" id="ENSGT00940000158684"/>
<dbReference type="HOGENOM" id="CLU_021097_0_0_1"/>
<dbReference type="InParanoid" id="Q6B4Z5"/>
<dbReference type="TreeFam" id="TF335557"/>
<dbReference type="Proteomes" id="UP000002277">
    <property type="component" value="Chromosome Y"/>
</dbReference>
<dbReference type="Bgee" id="ENSPTRG00000022471">
    <property type="expression patterns" value="Expressed in testis and 11 other cell types or tissues"/>
</dbReference>
<dbReference type="GO" id="GO:0005730">
    <property type="term" value="C:nucleolus"/>
    <property type="evidence" value="ECO:0007669"/>
    <property type="project" value="Ensembl"/>
</dbReference>
<dbReference type="GO" id="GO:0005654">
    <property type="term" value="C:nucleoplasm"/>
    <property type="evidence" value="ECO:0007669"/>
    <property type="project" value="Ensembl"/>
</dbReference>
<dbReference type="GO" id="GO:0005634">
    <property type="term" value="C:nucleus"/>
    <property type="evidence" value="ECO:0000318"/>
    <property type="project" value="GO_Central"/>
</dbReference>
<dbReference type="GO" id="GO:0000981">
    <property type="term" value="F:DNA-binding transcription factor activity, RNA polymerase II-specific"/>
    <property type="evidence" value="ECO:0000318"/>
    <property type="project" value="GO_Central"/>
</dbReference>
<dbReference type="GO" id="GO:0043565">
    <property type="term" value="F:sequence-specific DNA binding"/>
    <property type="evidence" value="ECO:0000318"/>
    <property type="project" value="GO_Central"/>
</dbReference>
<dbReference type="GO" id="GO:0008270">
    <property type="term" value="F:zinc ion binding"/>
    <property type="evidence" value="ECO:0007669"/>
    <property type="project" value="UniProtKB-KW"/>
</dbReference>
<dbReference type="GO" id="GO:0006357">
    <property type="term" value="P:regulation of transcription by RNA polymerase II"/>
    <property type="evidence" value="ECO:0000318"/>
    <property type="project" value="GO_Central"/>
</dbReference>
<dbReference type="FunFam" id="3.30.160.60:FF:000054">
    <property type="entry name" value="Zinc finger protein 711"/>
    <property type="match status" value="1"/>
</dbReference>
<dbReference type="FunFam" id="3.30.160.60:FF:000209">
    <property type="entry name" value="Zinc finger protein 711"/>
    <property type="match status" value="3"/>
</dbReference>
<dbReference type="FunFam" id="3.30.160.60:FF:000170">
    <property type="entry name" value="Zinc finger protein 711 isoform X2"/>
    <property type="match status" value="1"/>
</dbReference>
<dbReference type="FunFam" id="3.30.160.60:FF:000607">
    <property type="entry name" value="zinc finger X-chromosomal protein-like isoform X1"/>
    <property type="match status" value="1"/>
</dbReference>
<dbReference type="FunFam" id="3.30.160.60:FF:000461">
    <property type="entry name" value="Zinc finger X-chromosomal protein-like protein"/>
    <property type="match status" value="1"/>
</dbReference>
<dbReference type="Gene3D" id="3.30.160.60">
    <property type="entry name" value="Classic Zinc Finger"/>
    <property type="match status" value="8"/>
</dbReference>
<dbReference type="InterPro" id="IPR006794">
    <property type="entry name" value="Transcrp_activ_Zfx/Zfy-dom"/>
</dbReference>
<dbReference type="InterPro" id="IPR036236">
    <property type="entry name" value="Znf_C2H2_sf"/>
</dbReference>
<dbReference type="InterPro" id="IPR013087">
    <property type="entry name" value="Znf_C2H2_type"/>
</dbReference>
<dbReference type="PANTHER" id="PTHR24381:SF393">
    <property type="entry name" value="CHROMATIN-LINKED ADAPTOR FOR MSL PROTEINS, ISOFORM B"/>
    <property type="match status" value="1"/>
</dbReference>
<dbReference type="PANTHER" id="PTHR24381">
    <property type="entry name" value="ZINC FINGER PROTEIN"/>
    <property type="match status" value="1"/>
</dbReference>
<dbReference type="Pfam" id="PF00096">
    <property type="entry name" value="zf-C2H2"/>
    <property type="match status" value="7"/>
</dbReference>
<dbReference type="Pfam" id="PF13909">
    <property type="entry name" value="zf-H2C2_5"/>
    <property type="match status" value="1"/>
</dbReference>
<dbReference type="Pfam" id="PF04704">
    <property type="entry name" value="Zfx_Zfy_act"/>
    <property type="match status" value="1"/>
</dbReference>
<dbReference type="SMART" id="SM00355">
    <property type="entry name" value="ZnF_C2H2"/>
    <property type="match status" value="13"/>
</dbReference>
<dbReference type="SUPFAM" id="SSF57667">
    <property type="entry name" value="beta-beta-alpha zinc fingers"/>
    <property type="match status" value="7"/>
</dbReference>
<dbReference type="PROSITE" id="PS00028">
    <property type="entry name" value="ZINC_FINGER_C2H2_1"/>
    <property type="match status" value="8"/>
</dbReference>
<dbReference type="PROSITE" id="PS50157">
    <property type="entry name" value="ZINC_FINGER_C2H2_2"/>
    <property type="match status" value="12"/>
</dbReference>
<proteinExistence type="evidence at transcript level"/>
<organism>
    <name type="scientific">Pan troglodytes</name>
    <name type="common">Chimpanzee</name>
    <dbReference type="NCBI Taxonomy" id="9598"/>
    <lineage>
        <taxon>Eukaryota</taxon>
        <taxon>Metazoa</taxon>
        <taxon>Chordata</taxon>
        <taxon>Craniata</taxon>
        <taxon>Vertebrata</taxon>
        <taxon>Euteleostomi</taxon>
        <taxon>Mammalia</taxon>
        <taxon>Eutheria</taxon>
        <taxon>Euarchontoglires</taxon>
        <taxon>Primates</taxon>
        <taxon>Haplorrhini</taxon>
        <taxon>Catarrhini</taxon>
        <taxon>Hominidae</taxon>
        <taxon>Pan</taxon>
    </lineage>
</organism>
<protein>
    <recommendedName>
        <fullName>Zinc finger Y-chromosomal protein</fullName>
    </recommendedName>
</protein>
<evidence type="ECO:0000250" key="1"/>
<evidence type="ECO:0000250" key="2">
    <source>
        <dbReference type="UniProtKB" id="P17012"/>
    </source>
</evidence>
<evidence type="ECO:0000255" key="3">
    <source>
        <dbReference type="PROSITE-ProRule" id="PRU00042"/>
    </source>
</evidence>
<evidence type="ECO:0000305" key="4"/>
<keyword id="KW-0010">Activator</keyword>
<keyword id="KW-0238">DNA-binding</keyword>
<keyword id="KW-0479">Metal-binding</keyword>
<keyword id="KW-0539">Nucleus</keyword>
<keyword id="KW-0597">Phosphoprotein</keyword>
<keyword id="KW-1185">Reference proteome</keyword>
<keyword id="KW-0677">Repeat</keyword>
<keyword id="KW-0804">Transcription</keyword>
<keyword id="KW-0805">Transcription regulation</keyword>
<keyword id="KW-0862">Zinc</keyword>
<keyword id="KW-0863">Zinc-finger</keyword>
<feature type="chain" id="PRO_0000047262" description="Zinc finger Y-chromosomal protein">
    <location>
        <begin position="1"/>
        <end position="801"/>
    </location>
</feature>
<feature type="zinc finger region" description="C2H2-type 1" evidence="3">
    <location>
        <begin position="421"/>
        <end position="443"/>
    </location>
</feature>
<feature type="zinc finger region" description="C2H2-type 2; atypical" evidence="3">
    <location>
        <begin position="452"/>
        <end position="474"/>
    </location>
</feature>
<feature type="zinc finger region" description="C2H2-type 3" evidence="3">
    <location>
        <begin position="484"/>
        <end position="506"/>
    </location>
</feature>
<feature type="zinc finger region" description="C2H2-type 4" evidence="3">
    <location>
        <begin position="515"/>
        <end position="538"/>
    </location>
</feature>
<feature type="zinc finger region" description="C2H2-type 5" evidence="3">
    <location>
        <begin position="544"/>
        <end position="566"/>
    </location>
</feature>
<feature type="zinc finger region" description="C2H2-type 6" evidence="3">
    <location>
        <begin position="572"/>
        <end position="595"/>
    </location>
</feature>
<feature type="zinc finger region" description="C2H2-type 7" evidence="3">
    <location>
        <begin position="601"/>
        <end position="623"/>
    </location>
</feature>
<feature type="zinc finger region" description="C2H2-type 8" evidence="3">
    <location>
        <begin position="629"/>
        <end position="652"/>
    </location>
</feature>
<feature type="zinc finger region" description="C2H2-type 9" evidence="3">
    <location>
        <begin position="658"/>
        <end position="680"/>
    </location>
</feature>
<feature type="zinc finger region" description="C2H2-type 10" evidence="3">
    <location>
        <begin position="686"/>
        <end position="709"/>
    </location>
</feature>
<feature type="zinc finger region" description="C2H2-type 11" evidence="3">
    <location>
        <begin position="715"/>
        <end position="737"/>
    </location>
</feature>
<feature type="zinc finger region" description="C2H2-type 12" evidence="3">
    <location>
        <begin position="743"/>
        <end position="766"/>
    </location>
</feature>
<feature type="zinc finger region" description="C2H2-type 13" evidence="3">
    <location>
        <begin position="772"/>
        <end position="795"/>
    </location>
</feature>
<feature type="modified residue" description="Phosphoserine" evidence="2">
    <location>
        <position position="270"/>
    </location>
</feature>
<accession>Q6B4Z5</accession>
<accession>Q52V17</accession>